<name>GPMI_STAS1</name>
<gene>
    <name evidence="1" type="primary">gpmI</name>
    <name type="ordered locus">SSP1913</name>
</gene>
<reference key="1">
    <citation type="journal article" date="2005" name="Proc. Natl. Acad. Sci. U.S.A.">
        <title>Whole genome sequence of Staphylococcus saprophyticus reveals the pathogenesis of uncomplicated urinary tract infection.</title>
        <authorList>
            <person name="Kuroda M."/>
            <person name="Yamashita A."/>
            <person name="Hirakawa H."/>
            <person name="Kumano M."/>
            <person name="Morikawa K."/>
            <person name="Higashide M."/>
            <person name="Maruyama A."/>
            <person name="Inose Y."/>
            <person name="Matoba K."/>
            <person name="Toh H."/>
            <person name="Kuhara S."/>
            <person name="Hattori M."/>
            <person name="Ohta T."/>
        </authorList>
    </citation>
    <scope>NUCLEOTIDE SEQUENCE [LARGE SCALE GENOMIC DNA]</scope>
    <source>
        <strain>ATCC 15305 / DSM 20229 / NCIMB 8711 / NCTC 7292 / S-41</strain>
    </source>
</reference>
<keyword id="KW-0324">Glycolysis</keyword>
<keyword id="KW-0413">Isomerase</keyword>
<keyword id="KW-0464">Manganese</keyword>
<keyword id="KW-0479">Metal-binding</keyword>
<keyword id="KW-1185">Reference proteome</keyword>
<dbReference type="EC" id="5.4.2.12" evidence="1"/>
<dbReference type="EMBL" id="AP008934">
    <property type="protein sequence ID" value="BAE19058.1"/>
    <property type="molecule type" value="Genomic_DNA"/>
</dbReference>
<dbReference type="RefSeq" id="WP_011303586.1">
    <property type="nucleotide sequence ID" value="NZ_MTGA01000039.1"/>
</dbReference>
<dbReference type="SMR" id="Q49W02"/>
<dbReference type="GeneID" id="3615267"/>
<dbReference type="KEGG" id="ssp:SSP1913"/>
<dbReference type="PATRIC" id="fig|342451.11.peg.1907"/>
<dbReference type="eggNOG" id="COG0696">
    <property type="taxonomic scope" value="Bacteria"/>
</dbReference>
<dbReference type="HOGENOM" id="CLU_026099_2_0_9"/>
<dbReference type="OrthoDB" id="9800863at2"/>
<dbReference type="UniPathway" id="UPA00109">
    <property type="reaction ID" value="UER00186"/>
</dbReference>
<dbReference type="Proteomes" id="UP000006371">
    <property type="component" value="Chromosome"/>
</dbReference>
<dbReference type="GO" id="GO:0005829">
    <property type="term" value="C:cytosol"/>
    <property type="evidence" value="ECO:0007669"/>
    <property type="project" value="TreeGrafter"/>
</dbReference>
<dbReference type="GO" id="GO:0030145">
    <property type="term" value="F:manganese ion binding"/>
    <property type="evidence" value="ECO:0007669"/>
    <property type="project" value="UniProtKB-UniRule"/>
</dbReference>
<dbReference type="GO" id="GO:0004619">
    <property type="term" value="F:phosphoglycerate mutase activity"/>
    <property type="evidence" value="ECO:0007669"/>
    <property type="project" value="UniProtKB-EC"/>
</dbReference>
<dbReference type="GO" id="GO:0006007">
    <property type="term" value="P:glucose catabolic process"/>
    <property type="evidence" value="ECO:0007669"/>
    <property type="project" value="InterPro"/>
</dbReference>
<dbReference type="GO" id="GO:0006096">
    <property type="term" value="P:glycolytic process"/>
    <property type="evidence" value="ECO:0007669"/>
    <property type="project" value="UniProtKB-UniRule"/>
</dbReference>
<dbReference type="CDD" id="cd16010">
    <property type="entry name" value="iPGM"/>
    <property type="match status" value="1"/>
</dbReference>
<dbReference type="FunFam" id="3.40.1450.10:FF:000001">
    <property type="entry name" value="2,3-bisphosphoglycerate-independent phosphoglycerate mutase"/>
    <property type="match status" value="1"/>
</dbReference>
<dbReference type="FunFam" id="3.40.720.10:FF:000001">
    <property type="entry name" value="2,3-bisphosphoglycerate-independent phosphoglycerate mutase"/>
    <property type="match status" value="1"/>
</dbReference>
<dbReference type="Gene3D" id="3.40.720.10">
    <property type="entry name" value="Alkaline Phosphatase, subunit A"/>
    <property type="match status" value="1"/>
</dbReference>
<dbReference type="Gene3D" id="3.40.1450.10">
    <property type="entry name" value="BPG-independent phosphoglycerate mutase, domain B"/>
    <property type="match status" value="1"/>
</dbReference>
<dbReference type="HAMAP" id="MF_01038">
    <property type="entry name" value="GpmI"/>
    <property type="match status" value="1"/>
</dbReference>
<dbReference type="InterPro" id="IPR017850">
    <property type="entry name" value="Alkaline_phosphatase_core_sf"/>
</dbReference>
<dbReference type="InterPro" id="IPR011258">
    <property type="entry name" value="BPG-indep_PGM_N"/>
</dbReference>
<dbReference type="InterPro" id="IPR006124">
    <property type="entry name" value="Metalloenzyme"/>
</dbReference>
<dbReference type="InterPro" id="IPR036646">
    <property type="entry name" value="PGAM_B_sf"/>
</dbReference>
<dbReference type="InterPro" id="IPR005995">
    <property type="entry name" value="Pgm_bpd_ind"/>
</dbReference>
<dbReference type="NCBIfam" id="TIGR01307">
    <property type="entry name" value="pgm_bpd_ind"/>
    <property type="match status" value="1"/>
</dbReference>
<dbReference type="PANTHER" id="PTHR31637">
    <property type="entry name" value="2,3-BISPHOSPHOGLYCERATE-INDEPENDENT PHOSPHOGLYCERATE MUTASE"/>
    <property type="match status" value="1"/>
</dbReference>
<dbReference type="PANTHER" id="PTHR31637:SF0">
    <property type="entry name" value="2,3-BISPHOSPHOGLYCERATE-INDEPENDENT PHOSPHOGLYCERATE MUTASE"/>
    <property type="match status" value="1"/>
</dbReference>
<dbReference type="Pfam" id="PF06415">
    <property type="entry name" value="iPGM_N"/>
    <property type="match status" value="1"/>
</dbReference>
<dbReference type="Pfam" id="PF01676">
    <property type="entry name" value="Metalloenzyme"/>
    <property type="match status" value="1"/>
</dbReference>
<dbReference type="PIRSF" id="PIRSF001492">
    <property type="entry name" value="IPGAM"/>
    <property type="match status" value="1"/>
</dbReference>
<dbReference type="SUPFAM" id="SSF64158">
    <property type="entry name" value="2,3-Bisphosphoglycerate-independent phosphoglycerate mutase, substrate-binding domain"/>
    <property type="match status" value="1"/>
</dbReference>
<dbReference type="SUPFAM" id="SSF53649">
    <property type="entry name" value="Alkaline phosphatase-like"/>
    <property type="match status" value="1"/>
</dbReference>
<proteinExistence type="inferred from homology"/>
<accession>Q49W02</accession>
<organism>
    <name type="scientific">Staphylococcus saprophyticus subsp. saprophyticus (strain ATCC 15305 / DSM 20229 / NCIMB 8711 / NCTC 7292 / S-41)</name>
    <dbReference type="NCBI Taxonomy" id="342451"/>
    <lineage>
        <taxon>Bacteria</taxon>
        <taxon>Bacillati</taxon>
        <taxon>Bacillota</taxon>
        <taxon>Bacilli</taxon>
        <taxon>Bacillales</taxon>
        <taxon>Staphylococcaceae</taxon>
        <taxon>Staphylococcus</taxon>
    </lineage>
</organism>
<protein>
    <recommendedName>
        <fullName evidence="1">2,3-bisphosphoglycerate-independent phosphoglycerate mutase</fullName>
        <shortName evidence="1">BPG-independent PGAM</shortName>
        <shortName evidence="1">Phosphoglyceromutase</shortName>
        <shortName evidence="1">iPGM</shortName>
        <ecNumber evidence="1">5.4.2.12</ecNumber>
    </recommendedName>
</protein>
<comment type="function">
    <text evidence="1">Catalyzes the interconversion of 2-phosphoglycerate and 3-phosphoglycerate.</text>
</comment>
<comment type="catalytic activity">
    <reaction evidence="1">
        <text>(2R)-2-phosphoglycerate = (2R)-3-phosphoglycerate</text>
        <dbReference type="Rhea" id="RHEA:15901"/>
        <dbReference type="ChEBI" id="CHEBI:58272"/>
        <dbReference type="ChEBI" id="CHEBI:58289"/>
        <dbReference type="EC" id="5.4.2.12"/>
    </reaction>
</comment>
<comment type="cofactor">
    <cofactor evidence="1">
        <name>Mn(2+)</name>
        <dbReference type="ChEBI" id="CHEBI:29035"/>
    </cofactor>
    <text evidence="1">Binds 2 manganese ions per subunit.</text>
</comment>
<comment type="pathway">
    <text evidence="1">Carbohydrate degradation; glycolysis; pyruvate from D-glyceraldehyde 3-phosphate: step 3/5.</text>
</comment>
<comment type="subunit">
    <text evidence="1">Monomer.</text>
</comment>
<comment type="similarity">
    <text evidence="1">Belongs to the BPG-independent phosphoglycerate mutase family.</text>
</comment>
<feature type="chain" id="PRO_0000212216" description="2,3-bisphosphoglycerate-independent phosphoglycerate mutase">
    <location>
        <begin position="1"/>
        <end position="505"/>
    </location>
</feature>
<feature type="active site" description="Phosphoserine intermediate" evidence="1">
    <location>
        <position position="62"/>
    </location>
</feature>
<feature type="binding site" evidence="1">
    <location>
        <position position="12"/>
    </location>
    <ligand>
        <name>Mn(2+)</name>
        <dbReference type="ChEBI" id="CHEBI:29035"/>
        <label>2</label>
    </ligand>
</feature>
<feature type="binding site" evidence="1">
    <location>
        <position position="62"/>
    </location>
    <ligand>
        <name>Mn(2+)</name>
        <dbReference type="ChEBI" id="CHEBI:29035"/>
        <label>2</label>
    </ligand>
</feature>
<feature type="binding site" evidence="1">
    <location>
        <position position="123"/>
    </location>
    <ligand>
        <name>substrate</name>
    </ligand>
</feature>
<feature type="binding site" evidence="1">
    <location>
        <begin position="153"/>
        <end position="154"/>
    </location>
    <ligand>
        <name>substrate</name>
    </ligand>
</feature>
<feature type="binding site" evidence="1">
    <location>
        <position position="185"/>
    </location>
    <ligand>
        <name>substrate</name>
    </ligand>
</feature>
<feature type="binding site" evidence="1">
    <location>
        <position position="191"/>
    </location>
    <ligand>
        <name>substrate</name>
    </ligand>
</feature>
<feature type="binding site" evidence="1">
    <location>
        <begin position="257"/>
        <end position="260"/>
    </location>
    <ligand>
        <name>substrate</name>
    </ligand>
</feature>
<feature type="binding site" evidence="1">
    <location>
        <position position="330"/>
    </location>
    <ligand>
        <name>substrate</name>
    </ligand>
</feature>
<feature type="binding site" evidence="1">
    <location>
        <position position="397"/>
    </location>
    <ligand>
        <name>Mn(2+)</name>
        <dbReference type="ChEBI" id="CHEBI:29035"/>
        <label>1</label>
    </ligand>
</feature>
<feature type="binding site" evidence="1">
    <location>
        <position position="401"/>
    </location>
    <ligand>
        <name>Mn(2+)</name>
        <dbReference type="ChEBI" id="CHEBI:29035"/>
        <label>1</label>
    </ligand>
</feature>
<feature type="binding site" evidence="1">
    <location>
        <position position="438"/>
    </location>
    <ligand>
        <name>Mn(2+)</name>
        <dbReference type="ChEBI" id="CHEBI:29035"/>
        <label>2</label>
    </ligand>
</feature>
<feature type="binding site" evidence="1">
    <location>
        <position position="439"/>
    </location>
    <ligand>
        <name>Mn(2+)</name>
        <dbReference type="ChEBI" id="CHEBI:29035"/>
        <label>2</label>
    </ligand>
</feature>
<feature type="binding site" evidence="1">
    <location>
        <position position="456"/>
    </location>
    <ligand>
        <name>Mn(2+)</name>
        <dbReference type="ChEBI" id="CHEBI:29035"/>
        <label>1</label>
    </ligand>
</feature>
<sequence length="505" mass="56343">MAKQPTALIILDGFANRESEHGNAVKLANKPNFDRYYSKYPTTQIEASGLDVGLPEGQMGNSEVGHMNIGAGRVVYQSLTRINKSIEDGDFFENDVLNNAINHVKKNDSVLHVFGLLSDGGVHSHYKHLFALLDLAKKQGLEKVYVHAFLDGRDVDQKSALKYIEETEAKFKELGIGQFASVSGRYYAMDRDKRWDREEKAYNAIRNFGGTTFESAKAGVEANYDKDLTDEFVEPFIVQDQNEGVNDGDAVIFYNFRPDRAGQLSEIFTDKAFEGFKVEQINDLFYATFTKYNDNVNAEIVFEKVDLTNTIGEVAQDNGLKQLRIAETEKFPHVTYFMSGGRNEEFEGERRRLIDSPKVATYDLKPEMSAYEVKDALIEELNKGDLDLILLNFANPDMVGHSGMLEPTIKAIEAVDECLGEVVDKITEMGGHAIITADHGNSDMVLTDDDQPMTTHTTNPVPVIVTKDGVTLRETGRLGDLAPTLLDLLNVDQPEDMTGESLINH</sequence>
<evidence type="ECO:0000255" key="1">
    <source>
        <dbReference type="HAMAP-Rule" id="MF_01038"/>
    </source>
</evidence>